<dbReference type="EMBL" id="AC127540">
    <property type="status" value="NOT_ANNOTATED_CDS"/>
    <property type="molecule type" value="Genomic_DNA"/>
</dbReference>
<dbReference type="EMBL" id="AC093484">
    <property type="status" value="NOT_ANNOTATED_CDS"/>
    <property type="molecule type" value="Genomic_DNA"/>
</dbReference>
<dbReference type="EMBL" id="AK093015">
    <property type="protein sequence ID" value="BAC04020.1"/>
    <property type="molecule type" value="mRNA"/>
</dbReference>
<dbReference type="CCDS" id="CCDS11178.2">
    <molecule id="Q8NAA5-2"/>
</dbReference>
<dbReference type="CCDS" id="CCDS45620.1">
    <molecule id="Q8NAA5-1"/>
</dbReference>
<dbReference type="RefSeq" id="NP_001107039.1">
    <molecule id="Q8NAA5-1"/>
    <property type="nucleotide sequence ID" value="NM_001113567.3"/>
</dbReference>
<dbReference type="RefSeq" id="NP_997270.2">
    <molecule id="Q8NAA5-2"/>
    <property type="nucleotide sequence ID" value="NM_207387.4"/>
</dbReference>
<dbReference type="FunCoup" id="Q8NAA5">
    <property type="interactions" value="455"/>
</dbReference>
<dbReference type="GlyCosmos" id="Q8NAA5">
    <property type="glycosylation" value="1 site, 1 glycan"/>
</dbReference>
<dbReference type="GlyGen" id="Q8NAA5">
    <property type="glycosylation" value="1 site, 1 O-linked glycan (1 site)"/>
</dbReference>
<dbReference type="iPTMnet" id="Q8NAA5"/>
<dbReference type="PhosphoSitePlus" id="Q8NAA5"/>
<dbReference type="BioMuta" id="LRRC75A"/>
<dbReference type="DMDM" id="147640319"/>
<dbReference type="jPOST" id="Q8NAA5"/>
<dbReference type="MassIVE" id="Q8NAA5"/>
<dbReference type="PaxDb" id="9606-ENSP00000419502"/>
<dbReference type="PeptideAtlas" id="Q8NAA5"/>
<dbReference type="ProteomicsDB" id="72664">
    <molecule id="Q8NAA5-1"/>
</dbReference>
<dbReference type="ProteomicsDB" id="72665">
    <molecule id="Q8NAA5-2"/>
</dbReference>
<dbReference type="Antibodypedia" id="25337">
    <property type="antibodies" value="21 antibodies from 10 providers"/>
</dbReference>
<dbReference type="DNASU" id="388341"/>
<dbReference type="Ensembl" id="ENST00000409083.7">
    <molecule id="Q8NAA5-2"/>
    <property type="protein sequence ID" value="ENSP00000386504.3"/>
    <property type="gene ID" value="ENSG00000181350.12"/>
</dbReference>
<dbReference type="Ensembl" id="ENST00000470794.2">
    <molecule id="Q8NAA5-1"/>
    <property type="protein sequence ID" value="ENSP00000419502.1"/>
    <property type="gene ID" value="ENSG00000181350.12"/>
</dbReference>
<dbReference type="GeneID" id="388341"/>
<dbReference type="KEGG" id="hsa:388341"/>
<dbReference type="MANE-Select" id="ENST00000470794.2">
    <property type="protein sequence ID" value="ENSP00000419502.1"/>
    <property type="RefSeq nucleotide sequence ID" value="NM_001113567.3"/>
    <property type="RefSeq protein sequence ID" value="NP_001107039.1"/>
</dbReference>
<dbReference type="UCSC" id="uc002gqh.4">
    <molecule id="Q8NAA5-1"/>
    <property type="organism name" value="human"/>
</dbReference>
<dbReference type="AGR" id="HGNC:32403"/>
<dbReference type="CTD" id="388341"/>
<dbReference type="GeneCards" id="LRRC75A"/>
<dbReference type="HGNC" id="HGNC:32403">
    <property type="gene designation" value="LRRC75A"/>
</dbReference>
<dbReference type="HPA" id="ENSG00000181350">
    <property type="expression patterns" value="Tissue enhanced (intestine)"/>
</dbReference>
<dbReference type="neXtProt" id="NX_Q8NAA5"/>
<dbReference type="OpenTargets" id="ENSG00000181350"/>
<dbReference type="PharmGKB" id="PA143485400"/>
<dbReference type="VEuPathDB" id="HostDB:ENSG00000181350"/>
<dbReference type="eggNOG" id="ENOG502QVX0">
    <property type="taxonomic scope" value="Eukaryota"/>
</dbReference>
<dbReference type="GeneTree" id="ENSGT00940000161370"/>
<dbReference type="HOGENOM" id="CLU_112938_0_0_1"/>
<dbReference type="InParanoid" id="Q8NAA5"/>
<dbReference type="OMA" id="NPPDNTV"/>
<dbReference type="OrthoDB" id="9979103at2759"/>
<dbReference type="PAN-GO" id="Q8NAA5">
    <property type="GO annotations" value="1 GO annotation based on evolutionary models"/>
</dbReference>
<dbReference type="PhylomeDB" id="Q8NAA5"/>
<dbReference type="TreeFam" id="TF332831"/>
<dbReference type="PathwayCommons" id="Q8NAA5"/>
<dbReference type="SignaLink" id="Q8NAA5"/>
<dbReference type="BioGRID-ORCS" id="388341">
    <property type="hits" value="16 hits in 1142 CRISPR screens"/>
</dbReference>
<dbReference type="ChiTaRS" id="LRRC75A">
    <property type="organism name" value="human"/>
</dbReference>
<dbReference type="GenomeRNAi" id="388341"/>
<dbReference type="Pharos" id="Q8NAA5">
    <property type="development level" value="Tdark"/>
</dbReference>
<dbReference type="PRO" id="PR:Q8NAA5"/>
<dbReference type="Proteomes" id="UP000005640">
    <property type="component" value="Chromosome 17"/>
</dbReference>
<dbReference type="RNAct" id="Q8NAA5">
    <property type="molecule type" value="protein"/>
</dbReference>
<dbReference type="Bgee" id="ENSG00000181350">
    <property type="expression patterns" value="Expressed in ileal mucosa and 111 other cell types or tissues"/>
</dbReference>
<dbReference type="GO" id="GO:0031462">
    <property type="term" value="C:Cul2-RING ubiquitin ligase complex"/>
    <property type="evidence" value="ECO:0000318"/>
    <property type="project" value="GO_Central"/>
</dbReference>
<dbReference type="GO" id="GO:0005737">
    <property type="term" value="C:cytoplasm"/>
    <property type="evidence" value="ECO:0000318"/>
    <property type="project" value="GO_Central"/>
</dbReference>
<dbReference type="GO" id="GO:1990756">
    <property type="term" value="F:ubiquitin-like ligase-substrate adaptor activity"/>
    <property type="evidence" value="ECO:0000318"/>
    <property type="project" value="GO_Central"/>
</dbReference>
<dbReference type="GO" id="GO:0043161">
    <property type="term" value="P:proteasome-mediated ubiquitin-dependent protein catabolic process"/>
    <property type="evidence" value="ECO:0000318"/>
    <property type="project" value="GO_Central"/>
</dbReference>
<dbReference type="FunFam" id="3.80.10.10:FF:000158">
    <property type="entry name" value="Leucine rich repeat containing 75A"/>
    <property type="match status" value="1"/>
</dbReference>
<dbReference type="Gene3D" id="3.80.10.10">
    <property type="entry name" value="Ribonuclease Inhibitor"/>
    <property type="match status" value="1"/>
</dbReference>
<dbReference type="InterPro" id="IPR032675">
    <property type="entry name" value="LRR_dom_sf"/>
</dbReference>
<dbReference type="PANTHER" id="PTHR39654:SF3">
    <property type="entry name" value="LEUCINE RICH REPEAT CONTAINING 75A"/>
    <property type="match status" value="1"/>
</dbReference>
<dbReference type="PANTHER" id="PTHR39654">
    <property type="entry name" value="LEUCINE-RICH REPEAT-CONTAINING PROTEIN 75A-LIKE ISOFORM X1"/>
    <property type="match status" value="1"/>
</dbReference>
<dbReference type="SUPFAM" id="SSF52047">
    <property type="entry name" value="RNI-like"/>
    <property type="match status" value="1"/>
</dbReference>
<evidence type="ECO:0000256" key="1">
    <source>
        <dbReference type="SAM" id="MobiDB-lite"/>
    </source>
</evidence>
<evidence type="ECO:0000303" key="2">
    <source>
    </source>
</evidence>
<evidence type="ECO:0000305" key="3"/>
<feature type="chain" id="PRO_0000286624" description="Leucine-rich repeat-containing protein 75A">
    <location>
        <begin position="1"/>
        <end position="344"/>
    </location>
</feature>
<feature type="repeat" description="LRR 1">
    <location>
        <begin position="204"/>
        <end position="217"/>
    </location>
</feature>
<feature type="repeat" description="LRR 2">
    <location>
        <begin position="229"/>
        <end position="242"/>
    </location>
</feature>
<feature type="region of interest" description="Disordered" evidence="1">
    <location>
        <begin position="1"/>
        <end position="25"/>
    </location>
</feature>
<feature type="region of interest" description="Disordered" evidence="1">
    <location>
        <begin position="295"/>
        <end position="344"/>
    </location>
</feature>
<feature type="compositionally biased region" description="Low complexity" evidence="1">
    <location>
        <begin position="11"/>
        <end position="21"/>
    </location>
</feature>
<feature type="splice variant" id="VSP_025134" description="In isoform 2." evidence="2">
    <original>EGDALGAMEKLCRQLTYHLSPHSQWRRHRGLVKRKPQACLKAVLAGSPPDNTVDLSGIPLTSRDLERVTSYLQRCGEQVDSVELGFT</original>
    <variation>PQGCPGRKPPRQHSGPVGNPTDLPRPGAGDQLPTALWGAGRQRGAGLHRPHGRHGPAAAASTQHPAPPHHTGTQWQPVDPGRAARPH</variation>
    <location>
        <begin position="126"/>
        <end position="212"/>
    </location>
</feature>
<feature type="splice variant" id="VSP_025135" description="In isoform 2." evidence="2">
    <location>
        <begin position="213"/>
        <end position="344"/>
    </location>
</feature>
<name>LR75A_HUMAN</name>
<keyword id="KW-0025">Alternative splicing</keyword>
<keyword id="KW-0433">Leucine-rich repeat</keyword>
<keyword id="KW-1267">Proteomics identification</keyword>
<keyword id="KW-1185">Reference proteome</keyword>
<keyword id="KW-0677">Repeat</keyword>
<proteinExistence type="evidence at protein level"/>
<accession>Q8NAA5</accession>
<organism>
    <name type="scientific">Homo sapiens</name>
    <name type="common">Human</name>
    <dbReference type="NCBI Taxonomy" id="9606"/>
    <lineage>
        <taxon>Eukaryota</taxon>
        <taxon>Metazoa</taxon>
        <taxon>Chordata</taxon>
        <taxon>Craniata</taxon>
        <taxon>Vertebrata</taxon>
        <taxon>Euteleostomi</taxon>
        <taxon>Mammalia</taxon>
        <taxon>Eutheria</taxon>
        <taxon>Euarchontoglires</taxon>
        <taxon>Primates</taxon>
        <taxon>Haplorrhini</taxon>
        <taxon>Catarrhini</taxon>
        <taxon>Hominidae</taxon>
        <taxon>Homo</taxon>
    </lineage>
</organism>
<sequence length="344" mass="37780">MGTRQTKGSLAERASPGAAPGPRRERPDFWASLLLRAGDKAGRAGAGMPPYHRRVGMVQELLRMVRQGRREEAGTLLQHLRQDLGMESTSLDDVLYRYASFRNLVDPITHDLIISLARYIHCPKPEGDALGAMEKLCRQLTYHLSPHSQWRRHRGLVKRKPQACLKAVLAGSPPDNTVDLSGIPLTSRDLERVTSYLQRCGEQVDSVELGFTGLTDDMVLQLLPALSTLPRLTTLALNGNRLTRAVLRDLTDILKDPSKFPNVTWIDLGNNVDIFSLPQPFLLSLRKRSPKQGHLPTILELGEGPGSGEEVREGTVGQEDPGGGPVAPAEDHHEGKETVAAAQT</sequence>
<comment type="alternative products">
    <event type="alternative splicing"/>
    <isoform>
        <id>Q8NAA5-1</id>
        <name>1</name>
        <sequence type="displayed"/>
    </isoform>
    <isoform>
        <id>Q8NAA5-2</id>
        <name>2</name>
        <sequence type="described" ref="VSP_025134 VSP_025135"/>
    </isoform>
</comment>
<comment type="similarity">
    <text evidence="3">Belongs to the LRRC75 family.</text>
</comment>
<reference key="1">
    <citation type="journal article" date="2006" name="Nature">
        <title>DNA sequence of human chromosome 17 and analysis of rearrangement in the human lineage.</title>
        <authorList>
            <person name="Zody M.C."/>
            <person name="Garber M."/>
            <person name="Adams D.J."/>
            <person name="Sharpe T."/>
            <person name="Harrow J."/>
            <person name="Lupski J.R."/>
            <person name="Nicholson C."/>
            <person name="Searle S.M."/>
            <person name="Wilming L."/>
            <person name="Young S.K."/>
            <person name="Abouelleil A."/>
            <person name="Allen N.R."/>
            <person name="Bi W."/>
            <person name="Bloom T."/>
            <person name="Borowsky M.L."/>
            <person name="Bugalter B.E."/>
            <person name="Butler J."/>
            <person name="Chang J.L."/>
            <person name="Chen C.-K."/>
            <person name="Cook A."/>
            <person name="Corum B."/>
            <person name="Cuomo C.A."/>
            <person name="de Jong P.J."/>
            <person name="DeCaprio D."/>
            <person name="Dewar K."/>
            <person name="FitzGerald M."/>
            <person name="Gilbert J."/>
            <person name="Gibson R."/>
            <person name="Gnerre S."/>
            <person name="Goldstein S."/>
            <person name="Grafham D.V."/>
            <person name="Grocock R."/>
            <person name="Hafez N."/>
            <person name="Hagopian D.S."/>
            <person name="Hart E."/>
            <person name="Norman C.H."/>
            <person name="Humphray S."/>
            <person name="Jaffe D.B."/>
            <person name="Jones M."/>
            <person name="Kamal M."/>
            <person name="Khodiyar V.K."/>
            <person name="LaButti K."/>
            <person name="Laird G."/>
            <person name="Lehoczky J."/>
            <person name="Liu X."/>
            <person name="Lokyitsang T."/>
            <person name="Loveland J."/>
            <person name="Lui A."/>
            <person name="Macdonald P."/>
            <person name="Major J.E."/>
            <person name="Matthews L."/>
            <person name="Mauceli E."/>
            <person name="McCarroll S.A."/>
            <person name="Mihalev A.H."/>
            <person name="Mudge J."/>
            <person name="Nguyen C."/>
            <person name="Nicol R."/>
            <person name="O'Leary S.B."/>
            <person name="Osoegawa K."/>
            <person name="Schwartz D.C."/>
            <person name="Shaw-Smith C."/>
            <person name="Stankiewicz P."/>
            <person name="Steward C."/>
            <person name="Swarbreck D."/>
            <person name="Venkataraman V."/>
            <person name="Whittaker C.A."/>
            <person name="Yang X."/>
            <person name="Zimmer A.R."/>
            <person name="Bradley A."/>
            <person name="Hubbard T."/>
            <person name="Birren B.W."/>
            <person name="Rogers J."/>
            <person name="Lander E.S."/>
            <person name="Nusbaum C."/>
        </authorList>
    </citation>
    <scope>NUCLEOTIDE SEQUENCE [LARGE SCALE GENOMIC DNA]</scope>
</reference>
<reference key="2">
    <citation type="journal article" date="2004" name="Nat. Genet.">
        <title>Complete sequencing and characterization of 21,243 full-length human cDNAs.</title>
        <authorList>
            <person name="Ota T."/>
            <person name="Suzuki Y."/>
            <person name="Nishikawa T."/>
            <person name="Otsuki T."/>
            <person name="Sugiyama T."/>
            <person name="Irie R."/>
            <person name="Wakamatsu A."/>
            <person name="Hayashi K."/>
            <person name="Sato H."/>
            <person name="Nagai K."/>
            <person name="Kimura K."/>
            <person name="Makita H."/>
            <person name="Sekine M."/>
            <person name="Obayashi M."/>
            <person name="Nishi T."/>
            <person name="Shibahara T."/>
            <person name="Tanaka T."/>
            <person name="Ishii S."/>
            <person name="Yamamoto J."/>
            <person name="Saito K."/>
            <person name="Kawai Y."/>
            <person name="Isono Y."/>
            <person name="Nakamura Y."/>
            <person name="Nagahari K."/>
            <person name="Murakami K."/>
            <person name="Yasuda T."/>
            <person name="Iwayanagi T."/>
            <person name="Wagatsuma M."/>
            <person name="Shiratori A."/>
            <person name="Sudo H."/>
            <person name="Hosoiri T."/>
            <person name="Kaku Y."/>
            <person name="Kodaira H."/>
            <person name="Kondo H."/>
            <person name="Sugawara M."/>
            <person name="Takahashi M."/>
            <person name="Kanda K."/>
            <person name="Yokoi T."/>
            <person name="Furuya T."/>
            <person name="Kikkawa E."/>
            <person name="Omura Y."/>
            <person name="Abe K."/>
            <person name="Kamihara K."/>
            <person name="Katsuta N."/>
            <person name="Sato K."/>
            <person name="Tanikawa M."/>
            <person name="Yamazaki M."/>
            <person name="Ninomiya K."/>
            <person name="Ishibashi T."/>
            <person name="Yamashita H."/>
            <person name="Murakawa K."/>
            <person name="Fujimori K."/>
            <person name="Tanai H."/>
            <person name="Kimata M."/>
            <person name="Watanabe M."/>
            <person name="Hiraoka S."/>
            <person name="Chiba Y."/>
            <person name="Ishida S."/>
            <person name="Ono Y."/>
            <person name="Takiguchi S."/>
            <person name="Watanabe S."/>
            <person name="Yosida M."/>
            <person name="Hotuta T."/>
            <person name="Kusano J."/>
            <person name="Kanehori K."/>
            <person name="Takahashi-Fujii A."/>
            <person name="Hara H."/>
            <person name="Tanase T.-O."/>
            <person name="Nomura Y."/>
            <person name="Togiya S."/>
            <person name="Komai F."/>
            <person name="Hara R."/>
            <person name="Takeuchi K."/>
            <person name="Arita M."/>
            <person name="Imose N."/>
            <person name="Musashino K."/>
            <person name="Yuuki H."/>
            <person name="Oshima A."/>
            <person name="Sasaki N."/>
            <person name="Aotsuka S."/>
            <person name="Yoshikawa Y."/>
            <person name="Matsunawa H."/>
            <person name="Ichihara T."/>
            <person name="Shiohata N."/>
            <person name="Sano S."/>
            <person name="Moriya S."/>
            <person name="Momiyama H."/>
            <person name="Satoh N."/>
            <person name="Takami S."/>
            <person name="Terashima Y."/>
            <person name="Suzuki O."/>
            <person name="Nakagawa S."/>
            <person name="Senoh A."/>
            <person name="Mizoguchi H."/>
            <person name="Goto Y."/>
            <person name="Shimizu F."/>
            <person name="Wakebe H."/>
            <person name="Hishigaki H."/>
            <person name="Watanabe T."/>
            <person name="Sugiyama A."/>
            <person name="Takemoto M."/>
            <person name="Kawakami B."/>
            <person name="Yamazaki M."/>
            <person name="Watanabe K."/>
            <person name="Kumagai A."/>
            <person name="Itakura S."/>
            <person name="Fukuzumi Y."/>
            <person name="Fujimori Y."/>
            <person name="Komiyama M."/>
            <person name="Tashiro H."/>
            <person name="Tanigami A."/>
            <person name="Fujiwara T."/>
            <person name="Ono T."/>
            <person name="Yamada K."/>
            <person name="Fujii Y."/>
            <person name="Ozaki K."/>
            <person name="Hirao M."/>
            <person name="Ohmori Y."/>
            <person name="Kawabata A."/>
            <person name="Hikiji T."/>
            <person name="Kobatake N."/>
            <person name="Inagaki H."/>
            <person name="Ikema Y."/>
            <person name="Okamoto S."/>
            <person name="Okitani R."/>
            <person name="Kawakami T."/>
            <person name="Noguchi S."/>
            <person name="Itoh T."/>
            <person name="Shigeta K."/>
            <person name="Senba T."/>
            <person name="Matsumura K."/>
            <person name="Nakajima Y."/>
            <person name="Mizuno T."/>
            <person name="Morinaga M."/>
            <person name="Sasaki M."/>
            <person name="Togashi T."/>
            <person name="Oyama M."/>
            <person name="Hata H."/>
            <person name="Watanabe M."/>
            <person name="Komatsu T."/>
            <person name="Mizushima-Sugano J."/>
            <person name="Satoh T."/>
            <person name="Shirai Y."/>
            <person name="Takahashi Y."/>
            <person name="Nakagawa K."/>
            <person name="Okumura K."/>
            <person name="Nagase T."/>
            <person name="Nomura N."/>
            <person name="Kikuchi H."/>
            <person name="Masuho Y."/>
            <person name="Yamashita R."/>
            <person name="Nakai K."/>
            <person name="Yada T."/>
            <person name="Nakamura Y."/>
            <person name="Ohara O."/>
            <person name="Isogai T."/>
            <person name="Sugano S."/>
        </authorList>
    </citation>
    <scope>NUCLEOTIDE SEQUENCE [LARGE SCALE MRNA] OF 48-344 (ISOFORM 2)</scope>
    <source>
        <tissue>Spleen</tissue>
    </source>
</reference>
<gene>
    <name type="primary">LRRC75A</name>
    <name type="synonym">C17orf76</name>
    <name type="synonym">FAM211A</name>
</gene>
<protein>
    <recommendedName>
        <fullName>Leucine-rich repeat-containing protein 75A</fullName>
    </recommendedName>
    <alternativeName>
        <fullName>Leucine-rich repeat-containing protein FAM211A</fullName>
    </alternativeName>
</protein>